<dbReference type="EC" id="4.3.1.3" evidence="1"/>
<dbReference type="EMBL" id="AE017340">
    <property type="protein sequence ID" value="AAV83282.1"/>
    <property type="molecule type" value="Genomic_DNA"/>
</dbReference>
<dbReference type="RefSeq" id="WP_011235675.1">
    <property type="nucleotide sequence ID" value="NC_006512.1"/>
</dbReference>
<dbReference type="SMR" id="Q5QV30"/>
<dbReference type="STRING" id="283942.IL2450"/>
<dbReference type="GeneID" id="41337644"/>
<dbReference type="KEGG" id="ilo:IL2450"/>
<dbReference type="eggNOG" id="COG2986">
    <property type="taxonomic scope" value="Bacteria"/>
</dbReference>
<dbReference type="HOGENOM" id="CLU_014801_4_0_6"/>
<dbReference type="OrthoDB" id="9806955at2"/>
<dbReference type="UniPathway" id="UPA00379">
    <property type="reaction ID" value="UER00549"/>
</dbReference>
<dbReference type="Proteomes" id="UP000001171">
    <property type="component" value="Chromosome"/>
</dbReference>
<dbReference type="GO" id="GO:0005737">
    <property type="term" value="C:cytoplasm"/>
    <property type="evidence" value="ECO:0007669"/>
    <property type="project" value="UniProtKB-SubCell"/>
</dbReference>
<dbReference type="GO" id="GO:0004397">
    <property type="term" value="F:histidine ammonia-lyase activity"/>
    <property type="evidence" value="ECO:0007669"/>
    <property type="project" value="UniProtKB-UniRule"/>
</dbReference>
<dbReference type="GO" id="GO:0019556">
    <property type="term" value="P:L-histidine catabolic process to glutamate and formamide"/>
    <property type="evidence" value="ECO:0007669"/>
    <property type="project" value="UniProtKB-UniPathway"/>
</dbReference>
<dbReference type="GO" id="GO:0019557">
    <property type="term" value="P:L-histidine catabolic process to glutamate and formate"/>
    <property type="evidence" value="ECO:0007669"/>
    <property type="project" value="UniProtKB-UniPathway"/>
</dbReference>
<dbReference type="CDD" id="cd00332">
    <property type="entry name" value="PAL-HAL"/>
    <property type="match status" value="1"/>
</dbReference>
<dbReference type="FunFam" id="1.10.275.10:FF:000005">
    <property type="entry name" value="Histidine ammonia-lyase"/>
    <property type="match status" value="1"/>
</dbReference>
<dbReference type="FunFam" id="1.20.200.10:FF:000003">
    <property type="entry name" value="Histidine ammonia-lyase"/>
    <property type="match status" value="1"/>
</dbReference>
<dbReference type="Gene3D" id="1.20.200.10">
    <property type="entry name" value="Fumarase/aspartase (Central domain)"/>
    <property type="match status" value="1"/>
</dbReference>
<dbReference type="Gene3D" id="1.10.275.10">
    <property type="entry name" value="Fumarase/aspartase (N-terminal domain)"/>
    <property type="match status" value="1"/>
</dbReference>
<dbReference type="HAMAP" id="MF_00229">
    <property type="entry name" value="His_ammonia_lyase"/>
    <property type="match status" value="1"/>
</dbReference>
<dbReference type="InterPro" id="IPR001106">
    <property type="entry name" value="Aromatic_Lyase"/>
</dbReference>
<dbReference type="InterPro" id="IPR024083">
    <property type="entry name" value="Fumarase/histidase_N"/>
</dbReference>
<dbReference type="InterPro" id="IPR005921">
    <property type="entry name" value="HutH"/>
</dbReference>
<dbReference type="InterPro" id="IPR008948">
    <property type="entry name" value="L-Aspartase-like"/>
</dbReference>
<dbReference type="InterPro" id="IPR022313">
    <property type="entry name" value="Phe/His_NH3-lyase_AS"/>
</dbReference>
<dbReference type="NCBIfam" id="TIGR01225">
    <property type="entry name" value="hutH"/>
    <property type="match status" value="1"/>
</dbReference>
<dbReference type="NCBIfam" id="NF006871">
    <property type="entry name" value="PRK09367.1"/>
    <property type="match status" value="1"/>
</dbReference>
<dbReference type="PANTHER" id="PTHR10362">
    <property type="entry name" value="HISTIDINE AMMONIA-LYASE"/>
    <property type="match status" value="1"/>
</dbReference>
<dbReference type="Pfam" id="PF00221">
    <property type="entry name" value="Lyase_aromatic"/>
    <property type="match status" value="1"/>
</dbReference>
<dbReference type="SUPFAM" id="SSF48557">
    <property type="entry name" value="L-aspartase-like"/>
    <property type="match status" value="1"/>
</dbReference>
<dbReference type="PROSITE" id="PS00488">
    <property type="entry name" value="PAL_HISTIDASE"/>
    <property type="match status" value="1"/>
</dbReference>
<sequence length="511" mass="54794">MSHFELQPGQLQLSELRDWFYQHQTLKLSDEAKDNIATSAKTVADVLEQGRVVYGINTGFGLLANTRIPPERLTDLQRRIVLSHAAGTGDLMEDSVVRLMLLLKINSLSRGFSGVRQVLVDALIKLLNAEVYPCIPEKGSVGASGDLAPLAHMVLPLVGEGTVRHNGKVLNAEEGLKIAGIEPFELAPKEGLALLNGTQASTALALAGLFRIERNFHAAIVVGATSVEAAMGSRAPFDERVHAVRGQPGQIKAAEMLRHVLTDSSEIAKDHENCEKVQDPYSLRCQPQVMGAVLDQIEHASGILVREANGVTDNPLVFSEEQDIISGGNFHAEPVAMAADILAIAASEIGALSERRSALLIDSHLSKLPAFLVNDGGVNSGFMLAQVTAAALASENKTLAHPASVDSLPTSANQEDHVSMATFAARRLTDIAKNVSDIIAIEWLEAAQGLDFRRPLKGAAAVETAFNCLREQVAYYAEDRFFAPDIKAASDLIQNGELAAVVKLPHILSEV</sequence>
<feature type="chain" id="PRO_0000161009" description="Histidine ammonia-lyase">
    <location>
        <begin position="1"/>
        <end position="511"/>
    </location>
</feature>
<feature type="modified residue" description="2,3-didehydroalanine (Ser)" evidence="1">
    <location>
        <position position="144"/>
    </location>
</feature>
<feature type="cross-link" description="5-imidazolinone (Ala-Gly)" evidence="1">
    <location>
        <begin position="143"/>
        <end position="145"/>
    </location>
</feature>
<reference key="1">
    <citation type="journal article" date="2004" name="Proc. Natl. Acad. Sci. U.S.A.">
        <title>Genome sequence of the deep-sea gamma-proteobacterium Idiomarina loihiensis reveals amino acid fermentation as a source of carbon and energy.</title>
        <authorList>
            <person name="Hou S."/>
            <person name="Saw J.H."/>
            <person name="Lee K.S."/>
            <person name="Freitas T.A."/>
            <person name="Belisle C."/>
            <person name="Kawarabayasi Y."/>
            <person name="Donachie S.P."/>
            <person name="Pikina A."/>
            <person name="Galperin M.Y."/>
            <person name="Koonin E.V."/>
            <person name="Makarova K.S."/>
            <person name="Omelchenko M.V."/>
            <person name="Sorokin A."/>
            <person name="Wolf Y.I."/>
            <person name="Li Q.X."/>
            <person name="Keum Y.S."/>
            <person name="Campbell S."/>
            <person name="Denery J."/>
            <person name="Aizawa S."/>
            <person name="Shibata S."/>
            <person name="Malahoff A."/>
            <person name="Alam M."/>
        </authorList>
    </citation>
    <scope>NUCLEOTIDE SEQUENCE [LARGE SCALE GENOMIC DNA]</scope>
    <source>
        <strain>ATCC BAA-735 / DSM 15497 / L2-TR</strain>
    </source>
</reference>
<proteinExistence type="inferred from homology"/>
<keyword id="KW-0963">Cytoplasm</keyword>
<keyword id="KW-0369">Histidine metabolism</keyword>
<keyword id="KW-0456">Lyase</keyword>
<keyword id="KW-1185">Reference proteome</keyword>
<comment type="catalytic activity">
    <reaction evidence="1">
        <text>L-histidine = trans-urocanate + NH4(+)</text>
        <dbReference type="Rhea" id="RHEA:21232"/>
        <dbReference type="ChEBI" id="CHEBI:17771"/>
        <dbReference type="ChEBI" id="CHEBI:28938"/>
        <dbReference type="ChEBI" id="CHEBI:57595"/>
        <dbReference type="EC" id="4.3.1.3"/>
    </reaction>
</comment>
<comment type="pathway">
    <text evidence="1">Amino-acid degradation; L-histidine degradation into L-glutamate; N-formimidoyl-L-glutamate from L-histidine: step 1/3.</text>
</comment>
<comment type="subcellular location">
    <subcellularLocation>
        <location evidence="1">Cytoplasm</location>
    </subcellularLocation>
</comment>
<comment type="PTM">
    <text evidence="1">Contains an active site 4-methylidene-imidazol-5-one (MIO), which is formed autocatalytically by cyclization and dehydration of residues Ala-Ser-Gly.</text>
</comment>
<comment type="similarity">
    <text evidence="1">Belongs to the PAL/histidase family.</text>
</comment>
<name>HUTH_IDILO</name>
<organism>
    <name type="scientific">Idiomarina loihiensis (strain ATCC BAA-735 / DSM 15497 / L2-TR)</name>
    <dbReference type="NCBI Taxonomy" id="283942"/>
    <lineage>
        <taxon>Bacteria</taxon>
        <taxon>Pseudomonadati</taxon>
        <taxon>Pseudomonadota</taxon>
        <taxon>Gammaproteobacteria</taxon>
        <taxon>Alteromonadales</taxon>
        <taxon>Idiomarinaceae</taxon>
        <taxon>Idiomarina</taxon>
    </lineage>
</organism>
<evidence type="ECO:0000255" key="1">
    <source>
        <dbReference type="HAMAP-Rule" id="MF_00229"/>
    </source>
</evidence>
<gene>
    <name evidence="1" type="primary">hutH</name>
    <name type="ordered locus">IL2450</name>
</gene>
<accession>Q5QV30</accession>
<protein>
    <recommendedName>
        <fullName evidence="1">Histidine ammonia-lyase</fullName>
        <shortName evidence="1">Histidase</shortName>
        <ecNumber evidence="1">4.3.1.3</ecNumber>
    </recommendedName>
</protein>